<feature type="chain" id="PRO_0000271493" description="Xylose import ATP-binding protein XylG">
    <location>
        <begin position="1"/>
        <end position="511"/>
    </location>
</feature>
<feature type="domain" description="ABC transporter 1" evidence="1">
    <location>
        <begin position="6"/>
        <end position="244"/>
    </location>
</feature>
<feature type="domain" description="ABC transporter 2" evidence="1">
    <location>
        <begin position="261"/>
        <end position="506"/>
    </location>
</feature>
<feature type="binding site" evidence="1">
    <location>
        <begin position="38"/>
        <end position="45"/>
    </location>
    <ligand>
        <name>ATP</name>
        <dbReference type="ChEBI" id="CHEBI:30616"/>
    </ligand>
</feature>
<gene>
    <name evidence="1" type="primary">xylG</name>
    <name type="ordered locus">BruAb2_1088</name>
</gene>
<keyword id="KW-0067">ATP-binding</keyword>
<keyword id="KW-0997">Cell inner membrane</keyword>
<keyword id="KW-1003">Cell membrane</keyword>
<keyword id="KW-0472">Membrane</keyword>
<keyword id="KW-0547">Nucleotide-binding</keyword>
<keyword id="KW-0677">Repeat</keyword>
<keyword id="KW-0762">Sugar transport</keyword>
<keyword id="KW-1278">Translocase</keyword>
<keyword id="KW-0813">Transport</keyword>
<proteinExistence type="inferred from homology"/>
<name>XYLG_BRUAB</name>
<sequence>MSEYLLEMRNIGKEFNGVKALDGIYLKVRAGECVGLCGENGAGKSTLMKVLSGVYPHGTWTGEIFWEGKELKASGIRDTEAAGIVIIHQELMMVPHLSVAENIFLGCEPTTGGFIDYDQMNARAAELLARLKINDINVALPVYHYSGGKQQLIEIAKAINKNAKLLILDEPTSALTASETRVLIDLIKDFKKQGMACVYISHKLDEVAEISDTVTVIRDGAHIATRPMSELTTPDIITMMVGREMKNLFPREPHDIGEVMFEARNISCWDVTNPGRKVVDDVSFALRRGEILGIAGLVGAGRTELVSSLFGVWPGACQGQVFLEGKEIKIRTPRDAVRQGICMVPEDRKRDGILPIMPVGHNMTISVLDRFSLRGLIDKDAELVAIQREILRLKVKTADPMLAIASLSGGNQQKAVLSKMMLPDPKVLILDEPTRGVDVGAKYEIYKLIFALARQGVSILMVSSEMPEVLGISDRVLVIGEGKLRGDFPNENLTQEKVLAAAIGKPATNAA</sequence>
<evidence type="ECO:0000255" key="1">
    <source>
        <dbReference type="HAMAP-Rule" id="MF_01722"/>
    </source>
</evidence>
<reference key="1">
    <citation type="journal article" date="2005" name="J. Bacteriol.">
        <title>Completion of the genome sequence of Brucella abortus and comparison to the highly similar genomes of Brucella melitensis and Brucella suis.</title>
        <authorList>
            <person name="Halling S.M."/>
            <person name="Peterson-Burch B.D."/>
            <person name="Bricker B.J."/>
            <person name="Zuerner R.L."/>
            <person name="Qing Z."/>
            <person name="Li L.-L."/>
            <person name="Kapur V."/>
            <person name="Alt D.P."/>
            <person name="Olsen S.C."/>
        </authorList>
    </citation>
    <scope>NUCLEOTIDE SEQUENCE [LARGE SCALE GENOMIC DNA]</scope>
    <source>
        <strain>9-941</strain>
    </source>
</reference>
<organism>
    <name type="scientific">Brucella abortus biovar 1 (strain 9-941)</name>
    <dbReference type="NCBI Taxonomy" id="262698"/>
    <lineage>
        <taxon>Bacteria</taxon>
        <taxon>Pseudomonadati</taxon>
        <taxon>Pseudomonadota</taxon>
        <taxon>Alphaproteobacteria</taxon>
        <taxon>Hyphomicrobiales</taxon>
        <taxon>Brucellaceae</taxon>
        <taxon>Brucella/Ochrobactrum group</taxon>
        <taxon>Brucella</taxon>
    </lineage>
</organism>
<accession>Q576H3</accession>
<comment type="function">
    <text evidence="1">Part of the ABC transporter complex XylFGH involved in xylose import. Responsible for energy coupling to the transport system.</text>
</comment>
<comment type="catalytic activity">
    <reaction evidence="1">
        <text>D-xylose(out) + ATP + H2O = D-xylose(in) + ADP + phosphate + H(+)</text>
        <dbReference type="Rhea" id="RHEA:29899"/>
        <dbReference type="ChEBI" id="CHEBI:15377"/>
        <dbReference type="ChEBI" id="CHEBI:15378"/>
        <dbReference type="ChEBI" id="CHEBI:30616"/>
        <dbReference type="ChEBI" id="CHEBI:43474"/>
        <dbReference type="ChEBI" id="CHEBI:53455"/>
        <dbReference type="ChEBI" id="CHEBI:456216"/>
        <dbReference type="EC" id="7.5.2.10"/>
    </reaction>
</comment>
<comment type="subunit">
    <text evidence="1">The complex is composed of two ATP-binding proteins (XylG), two transmembrane proteins (XylH) and a solute-binding protein (XylF).</text>
</comment>
<comment type="subcellular location">
    <subcellularLocation>
        <location evidence="1">Cell inner membrane</location>
        <topology evidence="1">Peripheral membrane protein</topology>
    </subcellularLocation>
</comment>
<comment type="similarity">
    <text evidence="1">Belongs to the ABC transporter superfamily. Xylose importer (TC 3.A.1.2.4) family.</text>
</comment>
<protein>
    <recommendedName>
        <fullName evidence="1">Xylose import ATP-binding protein XylG</fullName>
        <ecNumber evidence="1">7.5.2.10</ecNumber>
    </recommendedName>
</protein>
<dbReference type="EC" id="7.5.2.10" evidence="1"/>
<dbReference type="EMBL" id="AE017224">
    <property type="protein sequence ID" value="AAX76461.1"/>
    <property type="molecule type" value="Genomic_DNA"/>
</dbReference>
<dbReference type="RefSeq" id="WP_002966631.1">
    <property type="nucleotide sequence ID" value="NC_006933.1"/>
</dbReference>
<dbReference type="SMR" id="Q576H3"/>
<dbReference type="EnsemblBacteria" id="AAX76461">
    <property type="protein sequence ID" value="AAX76461"/>
    <property type="gene ID" value="BruAb2_1088"/>
</dbReference>
<dbReference type="KEGG" id="bmb:BruAb2_1088"/>
<dbReference type="HOGENOM" id="CLU_000604_92_3_5"/>
<dbReference type="Proteomes" id="UP000000540">
    <property type="component" value="Chromosome II"/>
</dbReference>
<dbReference type="GO" id="GO:0005886">
    <property type="term" value="C:plasma membrane"/>
    <property type="evidence" value="ECO:0007669"/>
    <property type="project" value="UniProtKB-SubCell"/>
</dbReference>
<dbReference type="GO" id="GO:0015614">
    <property type="term" value="F:ABC-type D-xylose transporter activity"/>
    <property type="evidence" value="ECO:0007669"/>
    <property type="project" value="UniProtKB-EC"/>
</dbReference>
<dbReference type="GO" id="GO:0005524">
    <property type="term" value="F:ATP binding"/>
    <property type="evidence" value="ECO:0007669"/>
    <property type="project" value="UniProtKB-KW"/>
</dbReference>
<dbReference type="GO" id="GO:0016887">
    <property type="term" value="F:ATP hydrolysis activity"/>
    <property type="evidence" value="ECO:0007669"/>
    <property type="project" value="InterPro"/>
</dbReference>
<dbReference type="CDD" id="cd03216">
    <property type="entry name" value="ABC_Carb_Monos_I"/>
    <property type="match status" value="1"/>
</dbReference>
<dbReference type="CDD" id="cd03215">
    <property type="entry name" value="ABC_Carb_Monos_II"/>
    <property type="match status" value="1"/>
</dbReference>
<dbReference type="FunFam" id="3.40.50.300:FF:000126">
    <property type="entry name" value="Galactose/methyl galactoside import ATP-binding protein MglA"/>
    <property type="match status" value="1"/>
</dbReference>
<dbReference type="FunFam" id="3.40.50.300:FF:000127">
    <property type="entry name" value="Ribose import ATP-binding protein RbsA"/>
    <property type="match status" value="1"/>
</dbReference>
<dbReference type="Gene3D" id="3.40.50.300">
    <property type="entry name" value="P-loop containing nucleotide triphosphate hydrolases"/>
    <property type="match status" value="2"/>
</dbReference>
<dbReference type="InterPro" id="IPR003593">
    <property type="entry name" value="AAA+_ATPase"/>
</dbReference>
<dbReference type="InterPro" id="IPR050107">
    <property type="entry name" value="ABC_carbohydrate_import_ATPase"/>
</dbReference>
<dbReference type="InterPro" id="IPR003439">
    <property type="entry name" value="ABC_transporter-like_ATP-bd"/>
</dbReference>
<dbReference type="InterPro" id="IPR017871">
    <property type="entry name" value="ABC_transporter-like_CS"/>
</dbReference>
<dbReference type="InterPro" id="IPR013455">
    <property type="entry name" value="ABC_transptr_XylG"/>
</dbReference>
<dbReference type="InterPro" id="IPR027417">
    <property type="entry name" value="P-loop_NTPase"/>
</dbReference>
<dbReference type="NCBIfam" id="NF010069">
    <property type="entry name" value="PRK13549.1"/>
    <property type="match status" value="1"/>
</dbReference>
<dbReference type="NCBIfam" id="TIGR02633">
    <property type="entry name" value="xylG"/>
    <property type="match status" value="1"/>
</dbReference>
<dbReference type="PANTHER" id="PTHR43790">
    <property type="entry name" value="CARBOHYDRATE TRANSPORT ATP-BINDING PROTEIN MG119-RELATED"/>
    <property type="match status" value="1"/>
</dbReference>
<dbReference type="PANTHER" id="PTHR43790:SF1">
    <property type="entry name" value="XYLOSE IMPORT ATP-BINDING PROTEIN XYLG"/>
    <property type="match status" value="1"/>
</dbReference>
<dbReference type="Pfam" id="PF00005">
    <property type="entry name" value="ABC_tran"/>
    <property type="match status" value="2"/>
</dbReference>
<dbReference type="SMART" id="SM00382">
    <property type="entry name" value="AAA"/>
    <property type="match status" value="2"/>
</dbReference>
<dbReference type="SUPFAM" id="SSF52540">
    <property type="entry name" value="P-loop containing nucleoside triphosphate hydrolases"/>
    <property type="match status" value="2"/>
</dbReference>
<dbReference type="PROSITE" id="PS00211">
    <property type="entry name" value="ABC_TRANSPORTER_1"/>
    <property type="match status" value="1"/>
</dbReference>
<dbReference type="PROSITE" id="PS50893">
    <property type="entry name" value="ABC_TRANSPORTER_2"/>
    <property type="match status" value="2"/>
</dbReference>
<dbReference type="PROSITE" id="PS51280">
    <property type="entry name" value="XYLG"/>
    <property type="match status" value="1"/>
</dbReference>